<evidence type="ECO:0000255" key="1">
    <source>
        <dbReference type="HAMAP-Rule" id="MF_01543"/>
    </source>
</evidence>
<dbReference type="EC" id="6.3.4.3" evidence="1"/>
<dbReference type="EMBL" id="CP000728">
    <property type="protein sequence ID" value="ABS41963.1"/>
    <property type="molecule type" value="Genomic_DNA"/>
</dbReference>
<dbReference type="RefSeq" id="WP_003399652.1">
    <property type="nucleotide sequence ID" value="NC_009699.1"/>
</dbReference>
<dbReference type="SMR" id="A7GJB8"/>
<dbReference type="KEGG" id="cbf:CLI_3732"/>
<dbReference type="HOGENOM" id="CLU_003601_3_3_9"/>
<dbReference type="UniPathway" id="UPA00193"/>
<dbReference type="Proteomes" id="UP000002410">
    <property type="component" value="Chromosome"/>
</dbReference>
<dbReference type="GO" id="GO:0005524">
    <property type="term" value="F:ATP binding"/>
    <property type="evidence" value="ECO:0007669"/>
    <property type="project" value="UniProtKB-UniRule"/>
</dbReference>
<dbReference type="GO" id="GO:0004329">
    <property type="term" value="F:formate-tetrahydrofolate ligase activity"/>
    <property type="evidence" value="ECO:0007669"/>
    <property type="project" value="UniProtKB-UniRule"/>
</dbReference>
<dbReference type="GO" id="GO:0035999">
    <property type="term" value="P:tetrahydrofolate interconversion"/>
    <property type="evidence" value="ECO:0007669"/>
    <property type="project" value="UniProtKB-UniRule"/>
</dbReference>
<dbReference type="CDD" id="cd00477">
    <property type="entry name" value="FTHFS"/>
    <property type="match status" value="1"/>
</dbReference>
<dbReference type="FunFam" id="3.30.1510.10:FF:000001">
    <property type="entry name" value="Formate--tetrahydrofolate ligase"/>
    <property type="match status" value="1"/>
</dbReference>
<dbReference type="FunFam" id="3.10.410.10:FF:000001">
    <property type="entry name" value="Putative formate--tetrahydrofolate ligase"/>
    <property type="match status" value="1"/>
</dbReference>
<dbReference type="Gene3D" id="3.30.1510.10">
    <property type="entry name" value="Domain 2, N(10)-formyltetrahydrofolate synthetase"/>
    <property type="match status" value="1"/>
</dbReference>
<dbReference type="Gene3D" id="3.10.410.10">
    <property type="entry name" value="Formyltetrahydrofolate synthetase, domain 3"/>
    <property type="match status" value="1"/>
</dbReference>
<dbReference type="Gene3D" id="3.40.50.300">
    <property type="entry name" value="P-loop containing nucleotide triphosphate hydrolases"/>
    <property type="match status" value="1"/>
</dbReference>
<dbReference type="HAMAP" id="MF_01543">
    <property type="entry name" value="FTHFS"/>
    <property type="match status" value="1"/>
</dbReference>
<dbReference type="InterPro" id="IPR000559">
    <property type="entry name" value="Formate_THF_ligase"/>
</dbReference>
<dbReference type="InterPro" id="IPR020628">
    <property type="entry name" value="Formate_THF_ligase_CS"/>
</dbReference>
<dbReference type="InterPro" id="IPR027417">
    <property type="entry name" value="P-loop_NTPase"/>
</dbReference>
<dbReference type="NCBIfam" id="NF010030">
    <property type="entry name" value="PRK13505.1"/>
    <property type="match status" value="1"/>
</dbReference>
<dbReference type="Pfam" id="PF01268">
    <property type="entry name" value="FTHFS"/>
    <property type="match status" value="1"/>
</dbReference>
<dbReference type="SUPFAM" id="SSF52540">
    <property type="entry name" value="P-loop containing nucleoside triphosphate hydrolases"/>
    <property type="match status" value="1"/>
</dbReference>
<dbReference type="PROSITE" id="PS00721">
    <property type="entry name" value="FTHFS_1"/>
    <property type="match status" value="1"/>
</dbReference>
<dbReference type="PROSITE" id="PS00722">
    <property type="entry name" value="FTHFS_2"/>
    <property type="match status" value="1"/>
</dbReference>
<keyword id="KW-0067">ATP-binding</keyword>
<keyword id="KW-0436">Ligase</keyword>
<keyword id="KW-0547">Nucleotide-binding</keyword>
<keyword id="KW-0554">One-carbon metabolism</keyword>
<accession>A7GJB8</accession>
<organism>
    <name type="scientific">Clostridium botulinum (strain Langeland / NCTC 10281 / Type F)</name>
    <dbReference type="NCBI Taxonomy" id="441772"/>
    <lineage>
        <taxon>Bacteria</taxon>
        <taxon>Bacillati</taxon>
        <taxon>Bacillota</taxon>
        <taxon>Clostridia</taxon>
        <taxon>Eubacteriales</taxon>
        <taxon>Clostridiaceae</taxon>
        <taxon>Clostridium</taxon>
    </lineage>
</organism>
<sequence>MFKSDIEIAQESKMKNIKNIAEKIGLTEEDIDLYGKYKCKISLDVLESNKDKKDGKLILVTAINPTPAGEGKSTVTVGLGQALWKKNKKAVIALREPSLGPVFGIKGGAAGGGYSQVVPMEDINLHFTGDMHAITSANNLLAAAIDNHIHQGNILKIDQRRILFKRVMDMNDRALRNVIVALGGKINGFPREDGFMITVASEIMAILCLAEDLMDLKNKMGEILVAYSTEGKPIYCKDLEVQGAMALLMKDAIKPNLVQTLENTPAIIHGGPFANIAHGCNSILGTKMALKLGDYVITEAGFGADLGAEKFFDIKCRKANLKPNCVVIVATVRALKYNGGIPKENLKEQNMEALSKGIKNLGKHIENVNKFGVPAVVAINKFISDTEEEIEFIKKYCKELGAEVSIAEVWEKGGNGGLELADKVLDTIENKESKFNPIYEETLNIKQKIETIAQEIYGAEGVDYSKEAEKQISEIEKLDLDKKPVCMAKTQYSLSDDAKLLGRPCGFRINVKEVRISNGAGFIVVLTGNVMTMPGLPKKPAANNMDVLSDGNIVGLF</sequence>
<feature type="chain" id="PRO_0000318568" description="Formate--tetrahydrofolate ligase">
    <location>
        <begin position="1"/>
        <end position="557"/>
    </location>
</feature>
<feature type="binding site" evidence="1">
    <location>
        <begin position="66"/>
        <end position="73"/>
    </location>
    <ligand>
        <name>ATP</name>
        <dbReference type="ChEBI" id="CHEBI:30616"/>
    </ligand>
</feature>
<proteinExistence type="inferred from homology"/>
<name>FTHS_CLOBL</name>
<comment type="catalytic activity">
    <reaction evidence="1">
        <text>(6S)-5,6,7,8-tetrahydrofolate + formate + ATP = (6R)-10-formyltetrahydrofolate + ADP + phosphate</text>
        <dbReference type="Rhea" id="RHEA:20221"/>
        <dbReference type="ChEBI" id="CHEBI:15740"/>
        <dbReference type="ChEBI" id="CHEBI:30616"/>
        <dbReference type="ChEBI" id="CHEBI:43474"/>
        <dbReference type="ChEBI" id="CHEBI:57453"/>
        <dbReference type="ChEBI" id="CHEBI:195366"/>
        <dbReference type="ChEBI" id="CHEBI:456216"/>
        <dbReference type="EC" id="6.3.4.3"/>
    </reaction>
</comment>
<comment type="pathway">
    <text evidence="1">One-carbon metabolism; tetrahydrofolate interconversion.</text>
</comment>
<comment type="similarity">
    <text evidence="1">Belongs to the formate--tetrahydrofolate ligase family.</text>
</comment>
<protein>
    <recommendedName>
        <fullName evidence="1">Formate--tetrahydrofolate ligase</fullName>
        <ecNumber evidence="1">6.3.4.3</ecNumber>
    </recommendedName>
    <alternativeName>
        <fullName evidence="1">Formyltetrahydrofolate synthetase</fullName>
        <shortName evidence="1">FHS</shortName>
        <shortName evidence="1">FTHFS</shortName>
    </alternativeName>
</protein>
<reference key="1">
    <citation type="submission" date="2007-06" db="EMBL/GenBank/DDBJ databases">
        <authorList>
            <person name="Brinkac L.M."/>
            <person name="Daugherty S."/>
            <person name="Dodson R.J."/>
            <person name="Madupu R."/>
            <person name="Brown J.L."/>
            <person name="Bruce D."/>
            <person name="Detter C."/>
            <person name="Munk C."/>
            <person name="Smith L.A."/>
            <person name="Smith T.J."/>
            <person name="White O."/>
            <person name="Brettin T.S."/>
        </authorList>
    </citation>
    <scope>NUCLEOTIDE SEQUENCE [LARGE SCALE GENOMIC DNA]</scope>
    <source>
        <strain>Langeland / NCTC 10281 / Type F</strain>
    </source>
</reference>
<gene>
    <name evidence="1" type="primary">fhs</name>
    <name type="ordered locus">CLI_3732</name>
</gene>